<keyword id="KW-0963">Cytoplasm</keyword>
<keyword id="KW-0489">Methyltransferase</keyword>
<keyword id="KW-1185">Reference proteome</keyword>
<keyword id="KW-0694">RNA-binding</keyword>
<keyword id="KW-0698">rRNA processing</keyword>
<keyword id="KW-0949">S-adenosyl-L-methionine</keyword>
<keyword id="KW-0808">Transferase</keyword>
<proteinExistence type="inferred from homology"/>
<accession>Q07VV2</accession>
<feature type="chain" id="PRO_0000366259" description="Ribosomal RNA large subunit methyltransferase I">
    <location>
        <begin position="1"/>
        <end position="397"/>
    </location>
</feature>
<feature type="domain" description="PUA" evidence="1">
    <location>
        <begin position="2"/>
        <end position="80"/>
    </location>
</feature>
<name>RLMI_SHEFN</name>
<dbReference type="EC" id="2.1.1.191" evidence="1"/>
<dbReference type="EMBL" id="CP000447">
    <property type="protein sequence ID" value="ABI73862.1"/>
    <property type="molecule type" value="Genomic_DNA"/>
</dbReference>
<dbReference type="RefSeq" id="WP_011639442.1">
    <property type="nucleotide sequence ID" value="NC_008345.1"/>
</dbReference>
<dbReference type="SMR" id="Q07VV2"/>
<dbReference type="KEGG" id="sfr:Sfri_4037"/>
<dbReference type="eggNOG" id="COG1092">
    <property type="taxonomic scope" value="Bacteria"/>
</dbReference>
<dbReference type="HOGENOM" id="CLU_014042_0_0_6"/>
<dbReference type="OrthoDB" id="9805492at2"/>
<dbReference type="Proteomes" id="UP000000684">
    <property type="component" value="Chromosome"/>
</dbReference>
<dbReference type="GO" id="GO:0005737">
    <property type="term" value="C:cytoplasm"/>
    <property type="evidence" value="ECO:0007669"/>
    <property type="project" value="UniProtKB-SubCell"/>
</dbReference>
<dbReference type="GO" id="GO:0003723">
    <property type="term" value="F:RNA binding"/>
    <property type="evidence" value="ECO:0007669"/>
    <property type="project" value="UniProtKB-KW"/>
</dbReference>
<dbReference type="GO" id="GO:0016434">
    <property type="term" value="F:rRNA (cytosine) methyltransferase activity"/>
    <property type="evidence" value="ECO:0007669"/>
    <property type="project" value="UniProtKB-UniRule"/>
</dbReference>
<dbReference type="CDD" id="cd02440">
    <property type="entry name" value="AdoMet_MTases"/>
    <property type="match status" value="1"/>
</dbReference>
<dbReference type="CDD" id="cd21153">
    <property type="entry name" value="PUA_RlmI"/>
    <property type="match status" value="1"/>
</dbReference>
<dbReference type="CDD" id="cd11572">
    <property type="entry name" value="RlmI_M_like"/>
    <property type="match status" value="1"/>
</dbReference>
<dbReference type="Gene3D" id="2.30.130.10">
    <property type="entry name" value="PUA domain"/>
    <property type="match status" value="1"/>
</dbReference>
<dbReference type="Gene3D" id="3.30.750.80">
    <property type="entry name" value="RNA methyltransferase domain (HRMD) like"/>
    <property type="match status" value="1"/>
</dbReference>
<dbReference type="Gene3D" id="3.40.50.150">
    <property type="entry name" value="Vaccinia Virus protein VP39"/>
    <property type="match status" value="1"/>
</dbReference>
<dbReference type="HAMAP" id="MF_01857">
    <property type="entry name" value="23SrRNA_methyltr_I"/>
    <property type="match status" value="1"/>
</dbReference>
<dbReference type="InterPro" id="IPR002478">
    <property type="entry name" value="PUA"/>
</dbReference>
<dbReference type="InterPro" id="IPR015947">
    <property type="entry name" value="PUA-like_sf"/>
</dbReference>
<dbReference type="InterPro" id="IPR036974">
    <property type="entry name" value="PUA_sf"/>
</dbReference>
<dbReference type="InterPro" id="IPR023542">
    <property type="entry name" value="RLMI"/>
</dbReference>
<dbReference type="InterPro" id="IPR041532">
    <property type="entry name" value="RlmI-like_PUA"/>
</dbReference>
<dbReference type="InterPro" id="IPR019614">
    <property type="entry name" value="SAM-dep_methyl-trfase"/>
</dbReference>
<dbReference type="InterPro" id="IPR029063">
    <property type="entry name" value="SAM-dependent_MTases_sf"/>
</dbReference>
<dbReference type="PANTHER" id="PTHR42873">
    <property type="entry name" value="RIBOSOMAL RNA LARGE SUBUNIT METHYLTRANSFERASE"/>
    <property type="match status" value="1"/>
</dbReference>
<dbReference type="PANTHER" id="PTHR42873:SF1">
    <property type="entry name" value="S-ADENOSYLMETHIONINE-DEPENDENT METHYLTRANSFERASE DOMAIN-CONTAINING PROTEIN"/>
    <property type="match status" value="1"/>
</dbReference>
<dbReference type="Pfam" id="PF10672">
    <property type="entry name" value="Methyltrans_SAM"/>
    <property type="match status" value="1"/>
</dbReference>
<dbReference type="Pfam" id="PF17785">
    <property type="entry name" value="PUA_3"/>
    <property type="match status" value="1"/>
</dbReference>
<dbReference type="SMART" id="SM00359">
    <property type="entry name" value="PUA"/>
    <property type="match status" value="1"/>
</dbReference>
<dbReference type="SUPFAM" id="SSF88697">
    <property type="entry name" value="PUA domain-like"/>
    <property type="match status" value="1"/>
</dbReference>
<dbReference type="SUPFAM" id="SSF53335">
    <property type="entry name" value="S-adenosyl-L-methionine-dependent methyltransferases"/>
    <property type="match status" value="1"/>
</dbReference>
<dbReference type="PROSITE" id="PS50890">
    <property type="entry name" value="PUA"/>
    <property type="match status" value="1"/>
</dbReference>
<protein>
    <recommendedName>
        <fullName evidence="1">Ribosomal RNA large subunit methyltransferase I</fullName>
        <ecNumber evidence="1">2.1.1.191</ecNumber>
    </recommendedName>
    <alternativeName>
        <fullName evidence="1">23S rRNA m5C1962 methyltransferase</fullName>
    </alternativeName>
    <alternativeName>
        <fullName evidence="1">rRNA (cytosine-C(5)-)-methyltransferase RlmI</fullName>
    </alternativeName>
</protein>
<sequence>MAIRIKLKPGRERSLERRHPWIFSNGIHNVNGGKPQAGDTVEVVAHDGHWLGRGAWSPESQIQVRIWTFDKEETIDADFFARRIKRAQAGRDDLIREQGLTGYRLIAAESDGLPGITIDRYANVLVCQLLSTGAEKWRDTIVEQLVLQYPDCAVYERSDVDSRKKEGLVPVVGLLHGELPAMPVIIEENGIKIAVDVVKGHKTGFYLDQRDNRAMAARFVKGKSVLNCFCYTGTFGLYAAKAGAASIENVDVSTLALQTARDNMAINNLNDDHVNYNEADVFKLLRQYRDEGKTFDVIVLDPPKFADNKSQLDGACRGYKDINMIAMQLLNPGGILLTFSCSGLMQSDLFQKVVADAALDAKREVQFIERMHQASDHPISSAFPEGYYLKGLVARVW</sequence>
<comment type="function">
    <text evidence="1">Specifically methylates the cytosine at position 1962 (m5C1962) of 23S rRNA.</text>
</comment>
<comment type="catalytic activity">
    <reaction evidence="1">
        <text>cytidine(1962) in 23S rRNA + S-adenosyl-L-methionine = 5-methylcytidine(1962) in 23S rRNA + S-adenosyl-L-homocysteine + H(+)</text>
        <dbReference type="Rhea" id="RHEA:42912"/>
        <dbReference type="Rhea" id="RHEA-COMP:10382"/>
        <dbReference type="Rhea" id="RHEA-COMP:10386"/>
        <dbReference type="ChEBI" id="CHEBI:15378"/>
        <dbReference type="ChEBI" id="CHEBI:57856"/>
        <dbReference type="ChEBI" id="CHEBI:59789"/>
        <dbReference type="ChEBI" id="CHEBI:74483"/>
        <dbReference type="ChEBI" id="CHEBI:82748"/>
        <dbReference type="EC" id="2.1.1.191"/>
    </reaction>
</comment>
<comment type="subcellular location">
    <subcellularLocation>
        <location evidence="1">Cytoplasm</location>
    </subcellularLocation>
</comment>
<comment type="similarity">
    <text evidence="1">Belongs to the methyltransferase superfamily. RlmI family.</text>
</comment>
<gene>
    <name evidence="1" type="primary">rlmI</name>
    <name type="ordered locus">Sfri_4037</name>
</gene>
<organism>
    <name type="scientific">Shewanella frigidimarina (strain NCIMB 400)</name>
    <dbReference type="NCBI Taxonomy" id="318167"/>
    <lineage>
        <taxon>Bacteria</taxon>
        <taxon>Pseudomonadati</taxon>
        <taxon>Pseudomonadota</taxon>
        <taxon>Gammaproteobacteria</taxon>
        <taxon>Alteromonadales</taxon>
        <taxon>Shewanellaceae</taxon>
        <taxon>Shewanella</taxon>
    </lineage>
</organism>
<evidence type="ECO:0000255" key="1">
    <source>
        <dbReference type="HAMAP-Rule" id="MF_01857"/>
    </source>
</evidence>
<reference key="1">
    <citation type="submission" date="2006-08" db="EMBL/GenBank/DDBJ databases">
        <title>Complete sequence of Shewanella frigidimarina NCIMB 400.</title>
        <authorList>
            <consortium name="US DOE Joint Genome Institute"/>
            <person name="Copeland A."/>
            <person name="Lucas S."/>
            <person name="Lapidus A."/>
            <person name="Barry K."/>
            <person name="Detter J.C."/>
            <person name="Glavina del Rio T."/>
            <person name="Hammon N."/>
            <person name="Israni S."/>
            <person name="Dalin E."/>
            <person name="Tice H."/>
            <person name="Pitluck S."/>
            <person name="Fredrickson J.K."/>
            <person name="Kolker E."/>
            <person name="McCuel L.A."/>
            <person name="DiChristina T."/>
            <person name="Nealson K.H."/>
            <person name="Newman D."/>
            <person name="Tiedje J.M."/>
            <person name="Zhou J."/>
            <person name="Romine M.F."/>
            <person name="Culley D.E."/>
            <person name="Serres M."/>
            <person name="Chertkov O."/>
            <person name="Brettin T."/>
            <person name="Bruce D."/>
            <person name="Han C."/>
            <person name="Tapia R."/>
            <person name="Gilna P."/>
            <person name="Schmutz J."/>
            <person name="Larimer F."/>
            <person name="Land M."/>
            <person name="Hauser L."/>
            <person name="Kyrpides N."/>
            <person name="Mikhailova N."/>
            <person name="Richardson P."/>
        </authorList>
    </citation>
    <scope>NUCLEOTIDE SEQUENCE [LARGE SCALE GENOMIC DNA]</scope>
    <source>
        <strain>NCIMB 400</strain>
    </source>
</reference>